<feature type="chain" id="PRO_0000129419" description="Large ribosomal subunit protein uL23">
    <location>
        <begin position="1"/>
        <end position="100"/>
    </location>
</feature>
<keyword id="KW-1185">Reference proteome</keyword>
<keyword id="KW-0687">Ribonucleoprotein</keyword>
<keyword id="KW-0689">Ribosomal protein</keyword>
<keyword id="KW-0694">RNA-binding</keyword>
<keyword id="KW-0699">rRNA-binding</keyword>
<proteinExistence type="inferred from homology"/>
<name>RL23_MYCLE</name>
<sequence>MATIADSRDIILAPVISEKSYGLLDDNVYTFVVHPDSNKTQIKIAIEKIFSVKVASVNTSNRKGKCKRTRTGFGRRKNTKRAIVTLAPGSKSIDLFGTPA</sequence>
<dbReference type="EMBL" id="Z98756">
    <property type="protein sequence ID" value="CAB11464.1"/>
    <property type="molecule type" value="Genomic_DNA"/>
</dbReference>
<dbReference type="EMBL" id="AL583923">
    <property type="protein sequence ID" value="CAC30815.1"/>
    <property type="molecule type" value="Genomic_DNA"/>
</dbReference>
<dbReference type="PIR" id="T45366">
    <property type="entry name" value="T45366"/>
</dbReference>
<dbReference type="RefSeq" id="NP_302263.1">
    <property type="nucleotide sequence ID" value="NC_002677.1"/>
</dbReference>
<dbReference type="RefSeq" id="WP_010908584.1">
    <property type="nucleotide sequence ID" value="NC_002677.1"/>
</dbReference>
<dbReference type="SMR" id="O32983"/>
<dbReference type="STRING" id="272631.gene:17575709"/>
<dbReference type="KEGG" id="mle:ML1861"/>
<dbReference type="PATRIC" id="fig|272631.5.peg.3522"/>
<dbReference type="Leproma" id="ML1861"/>
<dbReference type="eggNOG" id="COG0089">
    <property type="taxonomic scope" value="Bacteria"/>
</dbReference>
<dbReference type="HOGENOM" id="CLU_037562_3_2_11"/>
<dbReference type="OrthoDB" id="9793353at2"/>
<dbReference type="Proteomes" id="UP000000806">
    <property type="component" value="Chromosome"/>
</dbReference>
<dbReference type="GO" id="GO:1990904">
    <property type="term" value="C:ribonucleoprotein complex"/>
    <property type="evidence" value="ECO:0007669"/>
    <property type="project" value="UniProtKB-KW"/>
</dbReference>
<dbReference type="GO" id="GO:0005840">
    <property type="term" value="C:ribosome"/>
    <property type="evidence" value="ECO:0007669"/>
    <property type="project" value="UniProtKB-KW"/>
</dbReference>
<dbReference type="GO" id="GO:0019843">
    <property type="term" value="F:rRNA binding"/>
    <property type="evidence" value="ECO:0007669"/>
    <property type="project" value="UniProtKB-UniRule"/>
</dbReference>
<dbReference type="GO" id="GO:0003735">
    <property type="term" value="F:structural constituent of ribosome"/>
    <property type="evidence" value="ECO:0007669"/>
    <property type="project" value="InterPro"/>
</dbReference>
<dbReference type="GO" id="GO:0006412">
    <property type="term" value="P:translation"/>
    <property type="evidence" value="ECO:0007669"/>
    <property type="project" value="UniProtKB-UniRule"/>
</dbReference>
<dbReference type="FunFam" id="3.30.70.330:FF:000001">
    <property type="entry name" value="50S ribosomal protein L23"/>
    <property type="match status" value="1"/>
</dbReference>
<dbReference type="Gene3D" id="3.30.70.330">
    <property type="match status" value="1"/>
</dbReference>
<dbReference type="HAMAP" id="MF_01369_B">
    <property type="entry name" value="Ribosomal_uL23_B"/>
    <property type="match status" value="1"/>
</dbReference>
<dbReference type="InterPro" id="IPR012677">
    <property type="entry name" value="Nucleotide-bd_a/b_plait_sf"/>
</dbReference>
<dbReference type="InterPro" id="IPR013025">
    <property type="entry name" value="Ribosomal_uL23-like"/>
</dbReference>
<dbReference type="InterPro" id="IPR012678">
    <property type="entry name" value="Ribosomal_uL23/eL15/eS24_sf"/>
</dbReference>
<dbReference type="InterPro" id="IPR001014">
    <property type="entry name" value="Ribosomal_uL23_CS"/>
</dbReference>
<dbReference type="NCBIfam" id="NF004363">
    <property type="entry name" value="PRK05738.2-4"/>
    <property type="match status" value="1"/>
</dbReference>
<dbReference type="NCBIfam" id="NF004364">
    <property type="entry name" value="PRK05738.2-5"/>
    <property type="match status" value="1"/>
</dbReference>
<dbReference type="PANTHER" id="PTHR11620">
    <property type="entry name" value="60S RIBOSOMAL PROTEIN L23A"/>
    <property type="match status" value="1"/>
</dbReference>
<dbReference type="Pfam" id="PF00276">
    <property type="entry name" value="Ribosomal_L23"/>
    <property type="match status" value="1"/>
</dbReference>
<dbReference type="SUPFAM" id="SSF54189">
    <property type="entry name" value="Ribosomal proteins S24e, L23 and L15e"/>
    <property type="match status" value="1"/>
</dbReference>
<dbReference type="PROSITE" id="PS00050">
    <property type="entry name" value="RIBOSOMAL_L23"/>
    <property type="match status" value="1"/>
</dbReference>
<reference key="1">
    <citation type="journal article" date="2001" name="Nature">
        <title>Massive gene decay in the leprosy bacillus.</title>
        <authorList>
            <person name="Cole S.T."/>
            <person name="Eiglmeier K."/>
            <person name="Parkhill J."/>
            <person name="James K.D."/>
            <person name="Thomson N.R."/>
            <person name="Wheeler P.R."/>
            <person name="Honore N."/>
            <person name="Garnier T."/>
            <person name="Churcher C.M."/>
            <person name="Harris D.E."/>
            <person name="Mungall K.L."/>
            <person name="Basham D."/>
            <person name="Brown D."/>
            <person name="Chillingworth T."/>
            <person name="Connor R."/>
            <person name="Davies R.M."/>
            <person name="Devlin K."/>
            <person name="Duthoy S."/>
            <person name="Feltwell T."/>
            <person name="Fraser A."/>
            <person name="Hamlin N."/>
            <person name="Holroyd S."/>
            <person name="Hornsby T."/>
            <person name="Jagels K."/>
            <person name="Lacroix C."/>
            <person name="Maclean J."/>
            <person name="Moule S."/>
            <person name="Murphy L.D."/>
            <person name="Oliver K."/>
            <person name="Quail M.A."/>
            <person name="Rajandream M.A."/>
            <person name="Rutherford K.M."/>
            <person name="Rutter S."/>
            <person name="Seeger K."/>
            <person name="Simon S."/>
            <person name="Simmonds M."/>
            <person name="Skelton J."/>
            <person name="Squares R."/>
            <person name="Squares S."/>
            <person name="Stevens K."/>
            <person name="Taylor K."/>
            <person name="Whitehead S."/>
            <person name="Woodward J.R."/>
            <person name="Barrell B.G."/>
        </authorList>
    </citation>
    <scope>NUCLEOTIDE SEQUENCE [LARGE SCALE GENOMIC DNA]</scope>
    <source>
        <strain>TN</strain>
    </source>
</reference>
<accession>O32983</accession>
<organism>
    <name type="scientific">Mycobacterium leprae (strain TN)</name>
    <dbReference type="NCBI Taxonomy" id="272631"/>
    <lineage>
        <taxon>Bacteria</taxon>
        <taxon>Bacillati</taxon>
        <taxon>Actinomycetota</taxon>
        <taxon>Actinomycetes</taxon>
        <taxon>Mycobacteriales</taxon>
        <taxon>Mycobacteriaceae</taxon>
        <taxon>Mycobacterium</taxon>
    </lineage>
</organism>
<gene>
    <name evidence="1" type="primary">rplW</name>
    <name type="ordered locus">ML1861</name>
    <name type="ORF">MLCB2492.04</name>
</gene>
<evidence type="ECO:0000255" key="1">
    <source>
        <dbReference type="HAMAP-Rule" id="MF_01369"/>
    </source>
</evidence>
<evidence type="ECO:0000305" key="2"/>
<comment type="function">
    <text evidence="1">One of the early assembly proteins it binds 23S rRNA. One of the proteins that surrounds the polypeptide exit tunnel on the outside of the ribosome. Forms the main docking site for trigger factor binding to the ribosome.</text>
</comment>
<comment type="subunit">
    <text evidence="1">Part of the 50S ribosomal subunit. Contacts protein L29, and trigger factor when it is bound to the ribosome.</text>
</comment>
<comment type="similarity">
    <text evidence="1">Belongs to the universal ribosomal protein uL23 family.</text>
</comment>
<protein>
    <recommendedName>
        <fullName evidence="1">Large ribosomal subunit protein uL23</fullName>
    </recommendedName>
    <alternativeName>
        <fullName evidence="2">50S ribosomal protein L23</fullName>
    </alternativeName>
</protein>